<name>EXPH5_HUMAN</name>
<reference key="1">
    <citation type="journal article" date="2002" name="FEBS Lett.">
        <title>Melanophilin directly links Rab27a and myosin Va through its distinct coiled-coil regions.</title>
        <authorList>
            <person name="Nagashima K."/>
            <person name="Torii S."/>
            <person name="Yi Z."/>
            <person name="Igarashi M."/>
            <person name="Okamoto K."/>
            <person name="Takeuchi T."/>
            <person name="Izumi T."/>
        </authorList>
    </citation>
    <scope>NUCLEOTIDE SEQUENCE [MRNA] (ISOFORM 1)</scope>
    <scope>POSSIBLE FUNCTION</scope>
    <scope>VARIANTS GLY-19; ASN-676 AND ARG-1663</scope>
    <source>
        <tissue>Placenta</tissue>
    </source>
</reference>
<reference key="2">
    <citation type="journal article" date="1998" name="DNA Res.">
        <title>Prediction of the coding sequences of unidentified human genes. X. The complete sequences of 100 new cDNA clones from brain which can code for large proteins in vitro.</title>
        <authorList>
            <person name="Ishikawa K."/>
            <person name="Nagase T."/>
            <person name="Suyama M."/>
            <person name="Miyajima N."/>
            <person name="Tanaka A."/>
            <person name="Kotani H."/>
            <person name="Nomura N."/>
            <person name="Ohara O."/>
        </authorList>
    </citation>
    <scope>NUCLEOTIDE SEQUENCE [LARGE SCALE MRNA] (ISOFORM 2)</scope>
    <scope>VARIANTS ASN-676 AND ARG-1663</scope>
    <source>
        <tissue>Brain</tissue>
    </source>
</reference>
<reference key="3">
    <citation type="journal article" date="2006" name="Nature">
        <title>Human chromosome 11 DNA sequence and analysis including novel gene identification.</title>
        <authorList>
            <person name="Taylor T.D."/>
            <person name="Noguchi H."/>
            <person name="Totoki Y."/>
            <person name="Toyoda A."/>
            <person name="Kuroki Y."/>
            <person name="Dewar K."/>
            <person name="Lloyd C."/>
            <person name="Itoh T."/>
            <person name="Takeda T."/>
            <person name="Kim D.-W."/>
            <person name="She X."/>
            <person name="Barlow K.F."/>
            <person name="Bloom T."/>
            <person name="Bruford E."/>
            <person name="Chang J.L."/>
            <person name="Cuomo C.A."/>
            <person name="Eichler E."/>
            <person name="FitzGerald M.G."/>
            <person name="Jaffe D.B."/>
            <person name="LaButti K."/>
            <person name="Nicol R."/>
            <person name="Park H.-S."/>
            <person name="Seaman C."/>
            <person name="Sougnez C."/>
            <person name="Yang X."/>
            <person name="Zimmer A.R."/>
            <person name="Zody M.C."/>
            <person name="Birren B.W."/>
            <person name="Nusbaum C."/>
            <person name="Fujiyama A."/>
            <person name="Hattori M."/>
            <person name="Rogers J."/>
            <person name="Lander E.S."/>
            <person name="Sakaki Y."/>
        </authorList>
    </citation>
    <scope>NUCLEOTIDE SEQUENCE [LARGE SCALE GENOMIC DNA]</scope>
</reference>
<reference key="4">
    <citation type="journal article" date="2004" name="Genome Res.">
        <title>The status, quality, and expansion of the NIH full-length cDNA project: the Mammalian Gene Collection (MGC).</title>
        <authorList>
            <consortium name="The MGC Project Team"/>
        </authorList>
    </citation>
    <scope>NUCLEOTIDE SEQUENCE [LARGE SCALE MRNA] (ISOFORM 1)</scope>
    <scope>VARIANTS GLY-19; ASN-676 AND ARG-1663</scope>
</reference>
<reference key="5">
    <citation type="journal article" date="2012" name="Am. J. Hum. Genet.">
        <title>Germline mutation in EXPH5 implicates the Rab27B effector protein SlaC2-b in inherited skin fragility.</title>
        <authorList>
            <person name="McGrath J.A."/>
            <person name="Stone K.L."/>
            <person name="Begum R."/>
            <person name="Simpson M.A."/>
            <person name="Dopping-Hepenstal P.J."/>
            <person name="Liu L."/>
            <person name="McMillan J.R."/>
            <person name="South A.P."/>
            <person name="Pourreyron C."/>
            <person name="McLean W.H."/>
            <person name="Martinez A.E."/>
            <person name="Mellerio J.E."/>
            <person name="Parsons M."/>
        </authorList>
    </citation>
    <scope>TISSUE SPECIFICITY</scope>
    <scope>INVOLVEMENT IN EBS4</scope>
</reference>
<reference key="6">
    <citation type="journal article" date="2013" name="J. Proteome Res.">
        <title>Toward a comprehensive characterization of a human cancer cell phosphoproteome.</title>
        <authorList>
            <person name="Zhou H."/>
            <person name="Di Palma S."/>
            <person name="Preisinger C."/>
            <person name="Peng M."/>
            <person name="Polat A.N."/>
            <person name="Heck A.J."/>
            <person name="Mohammed S."/>
        </authorList>
    </citation>
    <scope>PHOSPHORYLATION [LARGE SCALE ANALYSIS] AT SER-603; SER-806; SER-809; SER-1028; SER-1086; SER-1124; SER-1505; SER-1753; SER-1768; SER-1821 AND SER-1851</scope>
    <scope>IDENTIFICATION BY MASS SPECTROMETRY [LARGE SCALE ANALYSIS]</scope>
    <source>
        <tissue>Cervix carcinoma</tissue>
        <tissue>Erythroleukemia</tissue>
    </source>
</reference>
<reference key="7">
    <citation type="journal article" date="2014" name="J. Proteomics">
        <title>An enzyme assisted RP-RPLC approach for in-depth analysis of human liver phosphoproteome.</title>
        <authorList>
            <person name="Bian Y."/>
            <person name="Song C."/>
            <person name="Cheng K."/>
            <person name="Dong M."/>
            <person name="Wang F."/>
            <person name="Huang J."/>
            <person name="Sun D."/>
            <person name="Wang L."/>
            <person name="Ye M."/>
            <person name="Zou H."/>
        </authorList>
    </citation>
    <scope>PHOSPHORYLATION [LARGE SCALE ANALYSIS] AT SER-1753</scope>
    <scope>IDENTIFICATION BY MASS SPECTROMETRY [LARGE SCALE ANALYSIS]</scope>
    <source>
        <tissue>Liver</tissue>
    </source>
</reference>
<keyword id="KW-0025">Alternative splicing</keyword>
<keyword id="KW-0263">Epidermolysis bullosa</keyword>
<keyword id="KW-0597">Phosphoprotein</keyword>
<keyword id="KW-1267">Proteomics identification</keyword>
<keyword id="KW-1185">Reference proteome</keyword>
<comment type="function">
    <text>May act as Rab effector protein and play a role in vesicle trafficking.</text>
</comment>
<comment type="subunit">
    <text evidence="1">Interacts with RAB27A.</text>
</comment>
<comment type="alternative products">
    <event type="alternative splicing"/>
    <isoform>
        <id>Q8NEV8-1</id>
        <name>1</name>
        <sequence type="displayed"/>
    </isoform>
    <isoform>
        <id>Q8NEV8-2</id>
        <name>2</name>
        <sequence type="described" ref="VSP_007906"/>
    </isoform>
</comment>
<comment type="tissue specificity">
    <text evidence="6">Expressed in keratinocytes.</text>
</comment>
<comment type="disease" evidence="6">
    <disease id="DI-03676">
        <name>Epidermolysis bullosa simplex 4, localized or generalized intermediate, autosomal recessive</name>
        <acronym>EBS4</acronym>
        <description>A form of epidermolysis bullosa, a genodermatosis characterized by recurrent blistering, fragility of the skin and mucosal epithelia, and erosions caused by minor mechanical trauma. EBS4 is an autosomal recessive disorder characterized by mild skin fragility with onset at birth or in early childhood, associated with acral blistering with hemorrhagic crusts. Skin fragility improves with age in most patients, although mottled pigmentation may later develop on the trunk and proximal limbs.</description>
        <dbReference type="MIM" id="615028"/>
    </disease>
    <text>The disease is caused by variants affecting the gene represented in this entry.</text>
</comment>
<comment type="sequence caution" evidence="9">
    <conflict type="erroneous initiation">
        <sequence resource="EMBL-CDS" id="BAA31599"/>
    </conflict>
    <text>Extended N-terminus.</text>
</comment>
<sequence>MTKVPPAFDFSFLNDEEARKILQVLERNEELQRAEKDRISKLQKTKRDIRWLQGVTGEWFEEIQRKKFCNETDVSQMLKQPLTYRLSKEMAKNDPIELPTSRSKNVTNQKKPTPFSSRMSFRSSFASLFSFRKSGKETSKLPSLGQKGCDGHAGPPMPVRGAAVQAKIYNSPLENHLVDSTFVPKPAVMREESGMPPPWDASLLENEFFQVLDDLDSKLAQEQSASSVNTRTPLNYGSRTQFGHFYSSGNRHGNITERHKKHYNETSNMSIYDILRPGTPREGFKTFSPRTSTIYDMYRTREPRVFKEDYVQKNTFGSTSLCFDSRQRSALPATGHFTARSLHFPATTQSKSGFIPPRHQQSPKRTPLSSIIWNRSDSSRDRENQEEFLRAPSPMEIDPADKYVYPRGFQENKRYESYHSQNVYQRVSLNAPMENAMSPDTFENSENMPFYHQSNTFTRSFFSNTFGRSGEQRRFGQGPFWGQEKGHSFWSDFHRSRKSFSSSDRDFEMISMEANSVSAIHGHNVSSEHWESFSSGYGTDVSRGQEEPHPWQFDFQRSTLDSMVVSHGNETQLTPHFGTPNVCSMTGSSYHVKSSELVSQQDSSPVEVHINKEASSFGIAQTLASSFKTSFSQISDDRRNPQSPNLQNPTVTLQKIFPNKPASHPMRSHTEVTVTSSNSVDSLPLAKSQPNILVTEVNNEKDLNESISEEDKQLSKMDQTNKAGEIPQPVSQTGISNSLPDFQNPLSQDSAKSNGFGFNASTIISSKKSPRVFSRKDTSKMYIPHTDKSNDIKQDKRFTENRKLGSTASLPFIQEHRTPPSFPRTDQGCHQELTVNNEDISRIITNNHWSSALTDTQNAQYSKCKLTPGHKTSCDSLDLSSAALPDSSPSKNSSLDAPVVPSTTVFSRRSPSDKDPSLGEREEKDNAGKNQKNQFIVSHSENQERNDSPVPTHDEVVDVKCHSHSPFRNERGKGKIRHHISCIEKLSKTESISVPTSDHRSLIEANQSNSKVSELDTIYCTLPRKSSSFLIHGRQSGSKIMAASLRNGPPPFQIKNNVEDAMGNYMLNKFSPSSPESANECSKVLSDSALEAPEATERMTNVKSSGSTSVRKGPLPFLINRAMSCPSGEPHASTGREGRKKPLTSGMDASELTPRAWERIISPVESDSSVRDCSLTKRQHQKENFQEYTEKEGKMAASRRSVFALSNEDPLPFCSDLSGKERGKTLHKVKTTSTFSVSGDEDNVKCLEVVSIYYTLPRKPSKKFCNLLQQYTQNTNLLIESPQVETETFPNALEKDKQNYSTREQSGTPSCENLKMSVNSDQTLTTENMTAFRLSNRGPLAPTLQEMASVEAAVSLPEEESKAREIFSDNLAKTPLGDSENKKERGKKLQSETLHTSLMLQRKNVSEEKSENCQQSINSSNSGPSSLPALSEVNIGNSQTRRSSWECTGSGRAIPFTGSGKCPQKDHTSTAVGDGSSGSQPREGRGDIGTNCQKMTNKTLSHSESQVFALTPALHKLQLGEETQSDEPNLESLQSEPRELPQRSQEANMTESRKAEDEMQKSAWDQPSLPEGNKNKTNLDDLVKGENRSSVKHRLAAMSKASRKFPAKDVSPRRHVATIFPQSGSRSGFDHLSLGTVECNPLFPEPTPKSAESIGESRLSENGKHVKKSENLLPITVLPNREPSTHVSNQKSNSISQRHQNEFKNVSESPSKHENSKDVTAAQNLVRESGAPSPITFTSLREAEFSDNQRRLSPPFPLEPAQKSRVSSPLASFLQQQRSASSLEWEPEPHLYRSKSLKSINVHGDLLRKSHPPKVRERHFSESTSIDNALSRLTLGNEFSVNNGYSRRFRSFSELPSCDGNESWAYRSGTKTGPRSAISIYRPIDYGIFGKEQQLAFLENVKRSLTQGRLWKPSFLKNPGFLKDDLRNPPNPSESLSSNSPSSQVPEDGLSPSEPLNIYEDDPVDSDCDTDTTTDDEYYLDENDKESEL</sequence>
<accession>Q8NEV8</accession>
<accession>Q2KHM1</accession>
<accession>Q9Y4D6</accession>
<evidence type="ECO:0000250" key="1"/>
<evidence type="ECO:0000255" key="2">
    <source>
        <dbReference type="PROSITE-ProRule" id="PRU00234"/>
    </source>
</evidence>
<evidence type="ECO:0000256" key="3">
    <source>
        <dbReference type="SAM" id="MobiDB-lite"/>
    </source>
</evidence>
<evidence type="ECO:0000269" key="4">
    <source>
    </source>
</evidence>
<evidence type="ECO:0000269" key="5">
    <source>
    </source>
</evidence>
<evidence type="ECO:0000269" key="6">
    <source>
    </source>
</evidence>
<evidence type="ECO:0000269" key="7">
    <source>
    </source>
</evidence>
<evidence type="ECO:0000303" key="8">
    <source>
    </source>
</evidence>
<evidence type="ECO:0000305" key="9"/>
<evidence type="ECO:0000312" key="10">
    <source>
        <dbReference type="HGNC" id="HGNC:30578"/>
    </source>
</evidence>
<evidence type="ECO:0007744" key="11">
    <source>
    </source>
</evidence>
<evidence type="ECO:0007744" key="12">
    <source>
    </source>
</evidence>
<feature type="chain" id="PRO_0000190230" description="Exophilin-5">
    <location>
        <begin position="1"/>
        <end position="1989"/>
    </location>
</feature>
<feature type="domain" description="RabBD" evidence="2">
    <location>
        <begin position="7"/>
        <end position="63"/>
    </location>
</feature>
<feature type="region of interest" description="Disordered" evidence="3">
    <location>
        <begin position="93"/>
        <end position="117"/>
    </location>
</feature>
<feature type="region of interest" description="Disordered" evidence="3">
    <location>
        <begin position="348"/>
        <end position="391"/>
    </location>
</feature>
<feature type="region of interest" description="Disordered" evidence="3">
    <location>
        <begin position="631"/>
        <end position="651"/>
    </location>
</feature>
<feature type="region of interest" description="Disordered" evidence="3">
    <location>
        <begin position="806"/>
        <end position="827"/>
    </location>
</feature>
<feature type="region of interest" description="Disordered" evidence="3">
    <location>
        <begin position="882"/>
        <end position="933"/>
    </location>
</feature>
<feature type="region of interest" description="Disordered" evidence="3">
    <location>
        <begin position="1094"/>
        <end position="1113"/>
    </location>
</feature>
<feature type="region of interest" description="Disordered" evidence="3">
    <location>
        <begin position="1124"/>
        <end position="1152"/>
    </location>
</feature>
<feature type="region of interest" description="Disordered" evidence="3">
    <location>
        <begin position="1365"/>
        <end position="1493"/>
    </location>
</feature>
<feature type="region of interest" description="Disordered" evidence="3">
    <location>
        <begin position="1521"/>
        <end position="1590"/>
    </location>
</feature>
<feature type="region of interest" description="Disordered" evidence="3">
    <location>
        <begin position="1644"/>
        <end position="1737"/>
    </location>
</feature>
<feature type="region of interest" description="Disordered" evidence="3">
    <location>
        <begin position="1921"/>
        <end position="1989"/>
    </location>
</feature>
<feature type="compositionally biased region" description="Polar residues" evidence="3">
    <location>
        <begin position="100"/>
        <end position="111"/>
    </location>
</feature>
<feature type="compositionally biased region" description="Polar residues" evidence="3">
    <location>
        <begin position="359"/>
        <end position="376"/>
    </location>
</feature>
<feature type="compositionally biased region" description="Basic and acidic residues" evidence="3">
    <location>
        <begin position="377"/>
        <end position="389"/>
    </location>
</feature>
<feature type="compositionally biased region" description="Polar residues" evidence="3">
    <location>
        <begin position="641"/>
        <end position="651"/>
    </location>
</feature>
<feature type="compositionally biased region" description="Polar residues" evidence="3">
    <location>
        <begin position="891"/>
        <end position="909"/>
    </location>
</feature>
<feature type="compositionally biased region" description="Basic and acidic residues" evidence="3">
    <location>
        <begin position="910"/>
        <end position="927"/>
    </location>
</feature>
<feature type="compositionally biased region" description="Polar residues" evidence="3">
    <location>
        <begin position="1098"/>
        <end position="1110"/>
    </location>
</feature>
<feature type="compositionally biased region" description="Basic and acidic residues" evidence="3">
    <location>
        <begin position="1379"/>
        <end position="1390"/>
    </location>
</feature>
<feature type="compositionally biased region" description="Low complexity" evidence="3">
    <location>
        <begin position="1416"/>
        <end position="1431"/>
    </location>
</feature>
<feature type="compositionally biased region" description="Polar residues" evidence="3">
    <location>
        <begin position="1434"/>
        <end position="1447"/>
    </location>
</feature>
<feature type="compositionally biased region" description="Basic and acidic residues" evidence="3">
    <location>
        <begin position="1551"/>
        <end position="1560"/>
    </location>
</feature>
<feature type="compositionally biased region" description="Basic and acidic residues" evidence="3">
    <location>
        <begin position="1573"/>
        <end position="1589"/>
    </location>
</feature>
<feature type="compositionally biased region" description="Basic and acidic residues" evidence="3">
    <location>
        <begin position="1658"/>
        <end position="1670"/>
    </location>
</feature>
<feature type="compositionally biased region" description="Polar residues" evidence="3">
    <location>
        <begin position="1685"/>
        <end position="1709"/>
    </location>
</feature>
<feature type="compositionally biased region" description="Low complexity" evidence="3">
    <location>
        <begin position="1933"/>
        <end position="1943"/>
    </location>
</feature>
<feature type="compositionally biased region" description="Acidic residues" evidence="3">
    <location>
        <begin position="1959"/>
        <end position="1989"/>
    </location>
</feature>
<feature type="modified residue" description="Phosphoserine" evidence="11">
    <location>
        <position position="603"/>
    </location>
</feature>
<feature type="modified residue" description="Phosphoserine" evidence="11">
    <location>
        <position position="806"/>
    </location>
</feature>
<feature type="modified residue" description="Phosphoserine" evidence="11">
    <location>
        <position position="809"/>
    </location>
</feature>
<feature type="modified residue" description="Phosphoserine" evidence="11">
    <location>
        <position position="1028"/>
    </location>
</feature>
<feature type="modified residue" description="Phosphoserine" evidence="11">
    <location>
        <position position="1086"/>
    </location>
</feature>
<feature type="modified residue" description="Phosphoserine" evidence="11">
    <location>
        <position position="1124"/>
    </location>
</feature>
<feature type="modified residue" description="Phosphoserine" evidence="11">
    <location>
        <position position="1505"/>
    </location>
</feature>
<feature type="modified residue" description="Phosphoserine" evidence="11 12">
    <location>
        <position position="1753"/>
    </location>
</feature>
<feature type="modified residue" description="Phosphoserine" evidence="11">
    <location>
        <position position="1768"/>
    </location>
</feature>
<feature type="modified residue" description="Phosphoserine" evidence="11">
    <location>
        <position position="1821"/>
    </location>
</feature>
<feature type="modified residue" description="Phosphoserine" evidence="11">
    <location>
        <position position="1851"/>
    </location>
</feature>
<feature type="splice variant" id="VSP_007906" description="In isoform 2." evidence="8">
    <original>MTKVPPAFDF</original>
    <variation>MSL</variation>
    <location>
        <begin position="1"/>
        <end position="10"/>
    </location>
</feature>
<feature type="sequence variant" id="VAR_030538" description="In dbSNP:rs2640738." evidence="4 5">
    <original>R</original>
    <variation>G</variation>
    <location>
        <position position="19"/>
    </location>
</feature>
<feature type="sequence variant" id="VAR_030539" description="In dbSNP:rs3741046.">
    <original>R</original>
    <variation>L</variation>
    <location>
        <position position="118"/>
    </location>
</feature>
<feature type="sequence variant" id="VAR_030540" description="In dbSNP:rs2640785.">
    <original>E</original>
    <variation>V</variation>
    <location>
        <position position="137"/>
    </location>
</feature>
<feature type="sequence variant" id="VAR_030541" description="In dbSNP:rs11212684.">
    <original>R</original>
    <variation>Q</variation>
    <location>
        <position position="328"/>
    </location>
</feature>
<feature type="sequence variant" id="VAR_030542" description="In dbSNP:rs17108127.">
    <original>M</original>
    <variation>L</variation>
    <location>
        <position position="512"/>
    </location>
</feature>
<feature type="sequence variant" id="VAR_030543" description="In dbSNP:rs12146448.">
    <original>V</original>
    <variation>F</variation>
    <location>
        <position position="525"/>
    </location>
</feature>
<feature type="sequence variant" id="VAR_030544" description="In dbSNP:rs2846412." evidence="4 5 7">
    <original>S</original>
    <variation>N</variation>
    <location>
        <position position="676"/>
    </location>
</feature>
<feature type="sequence variant" id="VAR_030545" description="In dbSNP:rs3741048.">
    <original>D</original>
    <variation>N</variation>
    <location>
        <position position="777"/>
    </location>
</feature>
<feature type="sequence variant" id="VAR_030546" description="In dbSNP:rs10749920.">
    <original>L</original>
    <variation>P</variation>
    <location>
        <position position="853"/>
    </location>
</feature>
<feature type="sequence variant" id="VAR_030547" description="In dbSNP:rs10890850.">
    <original>N</original>
    <variation>Y</variation>
    <location>
        <position position="892"/>
    </location>
</feature>
<feature type="sequence variant" id="VAR_030548" description="In dbSNP:rs17108112.">
    <original>V</original>
    <variation>A</variation>
    <location>
        <position position="899"/>
    </location>
</feature>
<feature type="sequence variant" id="VAR_057117" description="In dbSNP:rs34012545.">
    <original>M</original>
    <variation>I</variation>
    <location>
        <position position="1147"/>
    </location>
</feature>
<feature type="sequence variant" id="VAR_057118" description="In dbSNP:rs35520914.">
    <original>S</original>
    <variation>A</variation>
    <location>
        <position position="1236"/>
    </location>
</feature>
<feature type="sequence variant" id="VAR_030549" description="In dbSNP:rs11828459.">
    <original>D</original>
    <variation>N</variation>
    <location>
        <position position="1240"/>
    </location>
</feature>
<feature type="sequence variant" id="VAR_030550" description="In dbSNP:rs877474.">
    <original>C</original>
    <variation>R</variation>
    <location>
        <position position="1311"/>
    </location>
</feature>
<feature type="sequence variant" id="VAR_057119" description="In dbSNP:rs34978242.">
    <original>T</original>
    <variation>A</variation>
    <location>
        <position position="1343"/>
    </location>
</feature>
<feature type="sequence variant" id="VAR_057120" description="In dbSNP:rs35083468.">
    <original>E</original>
    <variation>K</variation>
    <location>
        <position position="1656"/>
    </location>
</feature>
<feature type="sequence variant" id="VAR_030551" description="In dbSNP:rs2640779." evidence="4 5 7">
    <original>G</original>
    <variation>R</variation>
    <location>
        <position position="1663"/>
    </location>
</feature>
<feature type="sequence variant" id="VAR_057121" description="In dbSNP:rs35717245.">
    <original>I</original>
    <variation>F</variation>
    <location>
        <position position="1735"/>
    </location>
</feature>
<feature type="sequence variant" id="VAR_030552" description="In dbSNP:rs1943382." evidence="4 5 7">
    <original>D</original>
    <variation>N</variation>
    <location>
        <position position="1967"/>
    </location>
</feature>
<proteinExistence type="evidence at protein level"/>
<organism>
    <name type="scientific">Homo sapiens</name>
    <name type="common">Human</name>
    <dbReference type="NCBI Taxonomy" id="9606"/>
    <lineage>
        <taxon>Eukaryota</taxon>
        <taxon>Metazoa</taxon>
        <taxon>Chordata</taxon>
        <taxon>Craniata</taxon>
        <taxon>Vertebrata</taxon>
        <taxon>Euteleostomi</taxon>
        <taxon>Mammalia</taxon>
        <taxon>Eutheria</taxon>
        <taxon>Euarchontoglires</taxon>
        <taxon>Primates</taxon>
        <taxon>Haplorrhini</taxon>
        <taxon>Catarrhini</taxon>
        <taxon>Hominidae</taxon>
        <taxon>Homo</taxon>
    </lineage>
</organism>
<protein>
    <recommendedName>
        <fullName evidence="9">Exophilin-5</fullName>
    </recommendedName>
    <alternativeName>
        <fullName>Synaptotagmin-like protein homolog lacking C2 domains b</fullName>
        <shortName>SlaC2-b</shortName>
        <shortName>Slp homolog lacking C2 domains b</shortName>
    </alternativeName>
</protein>
<dbReference type="EMBL" id="AY099469">
    <property type="protein sequence ID" value="AAM44402.1"/>
    <property type="molecule type" value="mRNA"/>
</dbReference>
<dbReference type="EMBL" id="AB014524">
    <property type="protein sequence ID" value="BAA31599.1"/>
    <property type="status" value="ALT_INIT"/>
    <property type="molecule type" value="mRNA"/>
</dbReference>
<dbReference type="EMBL" id="AP000871">
    <property type="status" value="NOT_ANNOTATED_CDS"/>
    <property type="molecule type" value="Genomic_DNA"/>
</dbReference>
<dbReference type="EMBL" id="AP002453">
    <property type="status" value="NOT_ANNOTATED_CDS"/>
    <property type="molecule type" value="Genomic_DNA"/>
</dbReference>
<dbReference type="EMBL" id="AP005718">
    <property type="status" value="NOT_ANNOTATED_CDS"/>
    <property type="molecule type" value="Genomic_DNA"/>
</dbReference>
<dbReference type="EMBL" id="BC113119">
    <property type="protein sequence ID" value="AAI13120.1"/>
    <property type="molecule type" value="mRNA"/>
</dbReference>
<dbReference type="CCDS" id="CCDS76473.1">
    <molecule id="Q8NEV8-2"/>
</dbReference>
<dbReference type="CCDS" id="CCDS8341.1">
    <molecule id="Q8NEV8-1"/>
</dbReference>
<dbReference type="PIR" id="T00385">
    <property type="entry name" value="T00385"/>
</dbReference>
<dbReference type="RefSeq" id="NP_001294948.1">
    <molecule id="Q8NEV8-2"/>
    <property type="nucleotide sequence ID" value="NM_001308019.2"/>
</dbReference>
<dbReference type="RefSeq" id="NP_055880.2">
    <molecule id="Q8NEV8-1"/>
    <property type="nucleotide sequence ID" value="NM_015065.3"/>
</dbReference>
<dbReference type="SMR" id="Q8NEV8"/>
<dbReference type="CORUM" id="Q8NEV8"/>
<dbReference type="FunCoup" id="Q8NEV8">
    <property type="interactions" value="354"/>
</dbReference>
<dbReference type="IntAct" id="Q8NEV8">
    <property type="interactions" value="46"/>
</dbReference>
<dbReference type="MINT" id="Q8NEV8"/>
<dbReference type="STRING" id="9606.ENSP00000265843"/>
<dbReference type="GlyGen" id="Q8NEV8">
    <property type="glycosylation" value="1 site, 1 O-linked glycan (1 site)"/>
</dbReference>
<dbReference type="iPTMnet" id="Q8NEV8"/>
<dbReference type="PhosphoSitePlus" id="Q8NEV8"/>
<dbReference type="BioMuta" id="EXPH5"/>
<dbReference type="DMDM" id="296439360"/>
<dbReference type="jPOST" id="Q8NEV8"/>
<dbReference type="MassIVE" id="Q8NEV8"/>
<dbReference type="PaxDb" id="9606-ENSP00000265843"/>
<dbReference type="PeptideAtlas" id="Q8NEV8"/>
<dbReference type="ProteomicsDB" id="73221">
    <molecule id="Q8NEV8-1"/>
</dbReference>
<dbReference type="ProteomicsDB" id="73222">
    <molecule id="Q8NEV8-2"/>
</dbReference>
<dbReference type="Pumba" id="Q8NEV8"/>
<dbReference type="Antibodypedia" id="54955">
    <property type="antibodies" value="45 antibodies from 14 providers"/>
</dbReference>
<dbReference type="DNASU" id="23086"/>
<dbReference type="Ensembl" id="ENST00000265843.9">
    <molecule id="Q8NEV8-1"/>
    <property type="protein sequence ID" value="ENSP00000265843.4"/>
    <property type="gene ID" value="ENSG00000110723.12"/>
</dbReference>
<dbReference type="Ensembl" id="ENST00000525344.5">
    <molecule id="Q8NEV8-2"/>
    <property type="protein sequence ID" value="ENSP00000432546.1"/>
    <property type="gene ID" value="ENSG00000110723.12"/>
</dbReference>
<dbReference type="GeneID" id="23086"/>
<dbReference type="KEGG" id="hsa:23086"/>
<dbReference type="MANE-Select" id="ENST00000265843.9">
    <property type="protein sequence ID" value="ENSP00000265843.4"/>
    <property type="RefSeq nucleotide sequence ID" value="NM_015065.3"/>
    <property type="RefSeq protein sequence ID" value="NP_055880.2"/>
</dbReference>
<dbReference type="UCSC" id="uc001pkk.3">
    <molecule id="Q8NEV8-1"/>
    <property type="organism name" value="human"/>
</dbReference>
<dbReference type="AGR" id="HGNC:30578"/>
<dbReference type="CTD" id="23086"/>
<dbReference type="DisGeNET" id="23086"/>
<dbReference type="GeneCards" id="EXPH5"/>
<dbReference type="GeneReviews" id="EXPH5"/>
<dbReference type="HGNC" id="HGNC:30578">
    <property type="gene designation" value="EXPH5"/>
</dbReference>
<dbReference type="HPA" id="ENSG00000110723">
    <property type="expression patterns" value="Tissue enhanced (brain, skin)"/>
</dbReference>
<dbReference type="MalaCards" id="EXPH5"/>
<dbReference type="MIM" id="612878">
    <property type="type" value="gene"/>
</dbReference>
<dbReference type="MIM" id="615028">
    <property type="type" value="phenotype"/>
</dbReference>
<dbReference type="neXtProt" id="NX_Q8NEV8"/>
<dbReference type="OpenTargets" id="ENSG00000110723"/>
<dbReference type="Orphanet" id="412189">
    <property type="disease" value="Epidermolysis bullosa simplex due to exophilin 5 deficiency"/>
</dbReference>
<dbReference type="VEuPathDB" id="HostDB:ENSG00000110723"/>
<dbReference type="eggNOG" id="ENOG502RVAY">
    <property type="taxonomic scope" value="Eukaryota"/>
</dbReference>
<dbReference type="GeneTree" id="ENSGT00390000011087"/>
<dbReference type="HOGENOM" id="CLU_001683_0_0_1"/>
<dbReference type="InParanoid" id="Q8NEV8"/>
<dbReference type="OMA" id="HKNRYNE"/>
<dbReference type="OrthoDB" id="9908998at2759"/>
<dbReference type="PAN-GO" id="Q8NEV8">
    <property type="GO annotations" value="4 GO annotations based on evolutionary models"/>
</dbReference>
<dbReference type="PhylomeDB" id="Q8NEV8"/>
<dbReference type="TreeFam" id="TF335662"/>
<dbReference type="PathwayCommons" id="Q8NEV8"/>
<dbReference type="SignaLink" id="Q8NEV8"/>
<dbReference type="BioGRID-ORCS" id="23086">
    <property type="hits" value="11 hits in 1150 CRISPR screens"/>
</dbReference>
<dbReference type="ChiTaRS" id="EXPH5">
    <property type="organism name" value="human"/>
</dbReference>
<dbReference type="GenomeRNAi" id="23086"/>
<dbReference type="Pharos" id="Q8NEV8">
    <property type="development level" value="Tbio"/>
</dbReference>
<dbReference type="PRO" id="PR:Q8NEV8"/>
<dbReference type="Proteomes" id="UP000005640">
    <property type="component" value="Chromosome 11"/>
</dbReference>
<dbReference type="RNAct" id="Q8NEV8">
    <property type="molecule type" value="protein"/>
</dbReference>
<dbReference type="Bgee" id="ENSG00000110723">
    <property type="expression patterns" value="Expressed in tongue squamous epithelium and 178 other cell types or tissues"/>
</dbReference>
<dbReference type="ExpressionAtlas" id="Q8NEV8">
    <property type="expression patterns" value="baseline and differential"/>
</dbReference>
<dbReference type="GO" id="GO:0005768">
    <property type="term" value="C:endosome"/>
    <property type="evidence" value="ECO:0000314"/>
    <property type="project" value="UniProtKB"/>
</dbReference>
<dbReference type="GO" id="GO:0031267">
    <property type="term" value="F:small GTPase binding"/>
    <property type="evidence" value="ECO:0000353"/>
    <property type="project" value="UniProtKB"/>
</dbReference>
<dbReference type="GO" id="GO:0006886">
    <property type="term" value="P:intracellular protein transport"/>
    <property type="evidence" value="ECO:0007669"/>
    <property type="project" value="InterPro"/>
</dbReference>
<dbReference type="GO" id="GO:0003334">
    <property type="term" value="P:keratinocyte development"/>
    <property type="evidence" value="ECO:0000315"/>
    <property type="project" value="UniProtKB"/>
</dbReference>
<dbReference type="GO" id="GO:0071985">
    <property type="term" value="P:multivesicular body sorting pathway"/>
    <property type="evidence" value="ECO:0000315"/>
    <property type="project" value="UniProtKB"/>
</dbReference>
<dbReference type="GO" id="GO:0045921">
    <property type="term" value="P:positive regulation of exocytosis"/>
    <property type="evidence" value="ECO:0000315"/>
    <property type="project" value="UniProtKB"/>
</dbReference>
<dbReference type="GO" id="GO:0050714">
    <property type="term" value="P:positive regulation of protein secretion"/>
    <property type="evidence" value="ECO:0000315"/>
    <property type="project" value="UniProtKB"/>
</dbReference>
<dbReference type="Gene3D" id="6.10.250.3000">
    <property type="match status" value="1"/>
</dbReference>
<dbReference type="InterPro" id="IPR039916">
    <property type="entry name" value="EXPH5"/>
</dbReference>
<dbReference type="InterPro" id="IPR010911">
    <property type="entry name" value="Rab_BD"/>
</dbReference>
<dbReference type="PANTHER" id="PTHR21469">
    <property type="entry name" value="EXOPHILIN-5"/>
    <property type="match status" value="1"/>
</dbReference>
<dbReference type="PANTHER" id="PTHR21469:SF4">
    <property type="entry name" value="EXOPHILIN-5"/>
    <property type="match status" value="1"/>
</dbReference>
<dbReference type="PROSITE" id="PS50916">
    <property type="entry name" value="RABBD"/>
    <property type="match status" value="1"/>
</dbReference>
<gene>
    <name evidence="10" type="primary">EXPH5</name>
    <name type="synonym">KIAA0624</name>
    <name type="synonym">SLAC2B</name>
</gene>